<name>TIMP_DROME</name>
<gene>
    <name evidence="9 11 12" type="primary">Timp</name>
    <name evidence="12" type="ORF">CG6281</name>
</gene>
<sequence length="210" mass="23980">MDLRKHLGLLTLLLVAVFAFYGRPADACSCMPSHPQTHFAQADYVVQLRVLRKSDTIEPGRTTYKVHIKRTYKATSEARRMLRDGRLSTPQDDAMCGINLDLGKVYIVAGRMPTLNICSYYKEYTRMTITERHGFSGGYAKATNCTVTPCFGERCFKGRNYADTCKWSPFGKCETNYSACMPHKVQTVNGVISRCRWRRTQLYRKCMSNP</sequence>
<feature type="signal peptide" evidence="5">
    <location>
        <begin position="1"/>
        <end position="27"/>
    </location>
</feature>
<feature type="chain" id="PRO_0000034353" description="Tissue inhibitor of metalloproteinase">
    <location>
        <begin position="28"/>
        <end position="210"/>
    </location>
</feature>
<feature type="domain" description="NTR" evidence="3">
    <location>
        <begin position="28"/>
        <end position="145"/>
    </location>
</feature>
<feature type="region of interest" description="Involved in metalloproteinase-binding" evidence="1">
    <location>
        <begin position="28"/>
        <end position="31"/>
    </location>
</feature>
<feature type="region of interest" description="Involved in metalloproteinase-binding" evidence="1">
    <location>
        <begin position="93"/>
        <end position="94"/>
    </location>
</feature>
<feature type="binding site" evidence="1">
    <location>
        <position position="28"/>
    </location>
    <ligand>
        <name>Zn(2+)</name>
        <dbReference type="ChEBI" id="CHEBI:29105"/>
        <note>ligand shared with metalloproteinase partner</note>
    </ligand>
</feature>
<feature type="disulfide bond" evidence="3">
    <location>
        <begin position="28"/>
        <end position="96"/>
    </location>
</feature>
<feature type="disulfide bond" evidence="3">
    <location>
        <begin position="30"/>
        <end position="118"/>
    </location>
</feature>
<feature type="disulfide bond" evidence="3">
    <location>
        <begin position="145"/>
        <end position="195"/>
    </location>
</feature>
<feature type="disulfide bond" evidence="3">
    <location>
        <begin position="150"/>
        <end position="155"/>
    </location>
</feature>
<feature type="disulfide bond" evidence="3">
    <location>
        <begin position="165"/>
        <end position="180"/>
    </location>
</feature>
<feature type="sequence conflict" description="In Ref. 1; CAA08989." evidence="10" ref="1">
    <original>S</original>
    <variation>P</variation>
    <location>
        <position position="76"/>
    </location>
</feature>
<accession>Q9VH14</accession>
<accession>A4V2N5</accession>
<accession>O96747</accession>
<proteinExistence type="evidence at protein level"/>
<comment type="function">
    <text evidence="2 5 6 7 8">Metalloproteinase inhibitor that acts on both matrix metalloproteinases Mmp1 and Mmp2 in vitro (PubMed:14567681). Complexes with metalloproteinases and irreversibly inactivates them by binding to their catalytic zinc cofactor (By similarity). Required for wing maturation which is the final step in morphogenesis of the adult fly (PubMed:16962574). Involved in the negative regulation of developmental tissue invasion for imaginal disk eversion during metamorphosis by inhibiting Mmp-mediated basement membrane (BM) degradation (PubMed:17301221). Required for oogenesis and for the long-term maintainance of germarial structure and shape in the adult ovaries. Required for maintaining composition and biophysical properties of the extracellular matrix (ECM), and for the normal organization and cyst production of the germline stem cell (GSC) niche (PubMed:26808525).</text>
</comment>
<comment type="subcellular location">
    <subcellularLocation>
        <location evidence="5">Secreted</location>
    </subcellularLocation>
</comment>
<comment type="tissue specificity">
    <text evidence="4 6 8">Expressed in heads of female and male adult flies (PubMed:10961449). Expressed at the time of eclosion in unopened wings of adult flies (PubMed:16962574). Strongly expressed at the tip of ovarian germarium region 1 where germline stem cells (GSCs) and cystoblasts reside and in region 2 of the germarium (PubMed:26808525).</text>
</comment>
<comment type="developmental stage">
    <text evidence="4">Expressed throughout development in larvae and pupae. Expressed at embryonic stage 14-17 in a small constriction of the gut, in the full complement of cardial cells and in a paired anterior structure, possibly belonging to the antenno-maxillary complex.</text>
</comment>
<comment type="disruption phenotype">
    <text evidence="4 6 8">Adult flies display wings inflated with lymph, suffer from a bloated gut and progressive dissolution of internal tissues, have reduced fertility, show impaired fast phototactic responses, and die prematurely (PubMed:10961449). Flies display wings with fluid filled blisters approximately 22 hours after eclosion resulting from failure of dorsal and ventral cuticular wing surfaces to bond following normal migration of the epithelial cells from the wing (PubMed:16962574). Female flies are sub-viable, semi-sterile and grow smaller ovaries. Ovaries show cellular degeneration with escort cells and follicle cells often displaying clear cytoplasms, multi-lamellar bodies and multi-vesicular vacuoles containing cell debris. Ovaries have reduced levels of both extracellular matrix (ECM) collagen IV alpha chains. Reduced tissue stiffness along germaria of ovarioles, including the germline stem cell (GSC) niche and the area where the follicle stem cells reside, as well as in the follicular epithelium of early egg chambers and their interfollicular stalks, despite a largely normal distribution of major ECM components. Severely impaired oogenesis, abnormally long interfollicular stalks, significant alterations to germarium morphology and abnormalities in stem cell niche organization in aging ovaries. Impaired ability of the GSC niche to generate new cysts. Abnormal localization of matrix metalloproteinases Mmp1 and Mmp2 (PubMed:26808525).</text>
</comment>
<comment type="similarity">
    <text evidence="10">Belongs to the protease inhibitor I35 (TIMP) family.</text>
</comment>
<reference key="1">
    <citation type="journal article" date="1999" name="Genomics">
        <title>Invertebrate tissue inhibitor of metalloproteinase: structure and nested gene organization within the synapsin locus is conserved from Drosophila to human.</title>
        <authorList>
            <person name="Pohar N."/>
            <person name="Godenschwege T.A."/>
            <person name="Buchner E."/>
        </authorList>
    </citation>
    <scope>NUCLEOTIDE SEQUENCE [MRNA]</scope>
    <source>
        <strain>Canton-S</strain>
        <tissue>Head</tissue>
    </source>
</reference>
<reference key="2">
    <citation type="journal article" date="2000" name="Science">
        <title>The genome sequence of Drosophila melanogaster.</title>
        <authorList>
            <person name="Adams M.D."/>
            <person name="Celniker S.E."/>
            <person name="Holt R.A."/>
            <person name="Evans C.A."/>
            <person name="Gocayne J.D."/>
            <person name="Amanatides P.G."/>
            <person name="Scherer S.E."/>
            <person name="Li P.W."/>
            <person name="Hoskins R.A."/>
            <person name="Galle R.F."/>
            <person name="George R.A."/>
            <person name="Lewis S.E."/>
            <person name="Richards S."/>
            <person name="Ashburner M."/>
            <person name="Henderson S.N."/>
            <person name="Sutton G.G."/>
            <person name="Wortman J.R."/>
            <person name="Yandell M.D."/>
            <person name="Zhang Q."/>
            <person name="Chen L.X."/>
            <person name="Brandon R.C."/>
            <person name="Rogers Y.-H.C."/>
            <person name="Blazej R.G."/>
            <person name="Champe M."/>
            <person name="Pfeiffer B.D."/>
            <person name="Wan K.H."/>
            <person name="Doyle C."/>
            <person name="Baxter E.G."/>
            <person name="Helt G."/>
            <person name="Nelson C.R."/>
            <person name="Miklos G.L.G."/>
            <person name="Abril J.F."/>
            <person name="Agbayani A."/>
            <person name="An H.-J."/>
            <person name="Andrews-Pfannkoch C."/>
            <person name="Baldwin D."/>
            <person name="Ballew R.M."/>
            <person name="Basu A."/>
            <person name="Baxendale J."/>
            <person name="Bayraktaroglu L."/>
            <person name="Beasley E.M."/>
            <person name="Beeson K.Y."/>
            <person name="Benos P.V."/>
            <person name="Berman B.P."/>
            <person name="Bhandari D."/>
            <person name="Bolshakov S."/>
            <person name="Borkova D."/>
            <person name="Botchan M.R."/>
            <person name="Bouck J."/>
            <person name="Brokstein P."/>
            <person name="Brottier P."/>
            <person name="Burtis K.C."/>
            <person name="Busam D.A."/>
            <person name="Butler H."/>
            <person name="Cadieu E."/>
            <person name="Center A."/>
            <person name="Chandra I."/>
            <person name="Cherry J.M."/>
            <person name="Cawley S."/>
            <person name="Dahlke C."/>
            <person name="Davenport L.B."/>
            <person name="Davies P."/>
            <person name="de Pablos B."/>
            <person name="Delcher A."/>
            <person name="Deng Z."/>
            <person name="Mays A.D."/>
            <person name="Dew I."/>
            <person name="Dietz S.M."/>
            <person name="Dodson K."/>
            <person name="Doup L.E."/>
            <person name="Downes M."/>
            <person name="Dugan-Rocha S."/>
            <person name="Dunkov B.C."/>
            <person name="Dunn P."/>
            <person name="Durbin K.J."/>
            <person name="Evangelista C.C."/>
            <person name="Ferraz C."/>
            <person name="Ferriera S."/>
            <person name="Fleischmann W."/>
            <person name="Fosler C."/>
            <person name="Gabrielian A.E."/>
            <person name="Garg N.S."/>
            <person name="Gelbart W.M."/>
            <person name="Glasser K."/>
            <person name="Glodek A."/>
            <person name="Gong F."/>
            <person name="Gorrell J.H."/>
            <person name="Gu Z."/>
            <person name="Guan P."/>
            <person name="Harris M."/>
            <person name="Harris N.L."/>
            <person name="Harvey D.A."/>
            <person name="Heiman T.J."/>
            <person name="Hernandez J.R."/>
            <person name="Houck J."/>
            <person name="Hostin D."/>
            <person name="Houston K.A."/>
            <person name="Howland T.J."/>
            <person name="Wei M.-H."/>
            <person name="Ibegwam C."/>
            <person name="Jalali M."/>
            <person name="Kalush F."/>
            <person name="Karpen G.H."/>
            <person name="Ke Z."/>
            <person name="Kennison J.A."/>
            <person name="Ketchum K.A."/>
            <person name="Kimmel B.E."/>
            <person name="Kodira C.D."/>
            <person name="Kraft C.L."/>
            <person name="Kravitz S."/>
            <person name="Kulp D."/>
            <person name="Lai Z."/>
            <person name="Lasko P."/>
            <person name="Lei Y."/>
            <person name="Levitsky A.A."/>
            <person name="Li J.H."/>
            <person name="Li Z."/>
            <person name="Liang Y."/>
            <person name="Lin X."/>
            <person name="Liu X."/>
            <person name="Mattei B."/>
            <person name="McIntosh T.C."/>
            <person name="McLeod M.P."/>
            <person name="McPherson D."/>
            <person name="Merkulov G."/>
            <person name="Milshina N.V."/>
            <person name="Mobarry C."/>
            <person name="Morris J."/>
            <person name="Moshrefi A."/>
            <person name="Mount S.M."/>
            <person name="Moy M."/>
            <person name="Murphy B."/>
            <person name="Murphy L."/>
            <person name="Muzny D.M."/>
            <person name="Nelson D.L."/>
            <person name="Nelson D.R."/>
            <person name="Nelson K.A."/>
            <person name="Nixon K."/>
            <person name="Nusskern D.R."/>
            <person name="Pacleb J.M."/>
            <person name="Palazzolo M."/>
            <person name="Pittman G.S."/>
            <person name="Pan S."/>
            <person name="Pollard J."/>
            <person name="Puri V."/>
            <person name="Reese M.G."/>
            <person name="Reinert K."/>
            <person name="Remington K."/>
            <person name="Saunders R.D.C."/>
            <person name="Scheeler F."/>
            <person name="Shen H."/>
            <person name="Shue B.C."/>
            <person name="Siden-Kiamos I."/>
            <person name="Simpson M."/>
            <person name="Skupski M.P."/>
            <person name="Smith T.J."/>
            <person name="Spier E."/>
            <person name="Spradling A.C."/>
            <person name="Stapleton M."/>
            <person name="Strong R."/>
            <person name="Sun E."/>
            <person name="Svirskas R."/>
            <person name="Tector C."/>
            <person name="Turner R."/>
            <person name="Venter E."/>
            <person name="Wang A.H."/>
            <person name="Wang X."/>
            <person name="Wang Z.-Y."/>
            <person name="Wassarman D.A."/>
            <person name="Weinstock G.M."/>
            <person name="Weissenbach J."/>
            <person name="Williams S.M."/>
            <person name="Woodage T."/>
            <person name="Worley K.C."/>
            <person name="Wu D."/>
            <person name="Yang S."/>
            <person name="Yao Q.A."/>
            <person name="Ye J."/>
            <person name="Yeh R.-F."/>
            <person name="Zaveri J.S."/>
            <person name="Zhan M."/>
            <person name="Zhang G."/>
            <person name="Zhao Q."/>
            <person name="Zheng L."/>
            <person name="Zheng X.H."/>
            <person name="Zhong F.N."/>
            <person name="Zhong W."/>
            <person name="Zhou X."/>
            <person name="Zhu S.C."/>
            <person name="Zhu X."/>
            <person name="Smith H.O."/>
            <person name="Gibbs R.A."/>
            <person name="Myers E.W."/>
            <person name="Rubin G.M."/>
            <person name="Venter J.C."/>
        </authorList>
    </citation>
    <scope>NUCLEOTIDE SEQUENCE [LARGE SCALE GENOMIC DNA]</scope>
    <source>
        <strain>Berkeley</strain>
    </source>
</reference>
<reference key="3">
    <citation type="journal article" date="2002" name="Genome Biol.">
        <title>Annotation of the Drosophila melanogaster euchromatic genome: a systematic review.</title>
        <authorList>
            <person name="Misra S."/>
            <person name="Crosby M.A."/>
            <person name="Mungall C.J."/>
            <person name="Matthews B.B."/>
            <person name="Campbell K.S."/>
            <person name="Hradecky P."/>
            <person name="Huang Y."/>
            <person name="Kaminker J.S."/>
            <person name="Millburn G.H."/>
            <person name="Prochnik S.E."/>
            <person name="Smith C.D."/>
            <person name="Tupy J.L."/>
            <person name="Whitfield E.J."/>
            <person name="Bayraktaroglu L."/>
            <person name="Berman B.P."/>
            <person name="Bettencourt B.R."/>
            <person name="Celniker S.E."/>
            <person name="de Grey A.D.N.J."/>
            <person name="Drysdale R.A."/>
            <person name="Harris N.L."/>
            <person name="Richter J."/>
            <person name="Russo S."/>
            <person name="Schroeder A.J."/>
            <person name="Shu S.Q."/>
            <person name="Stapleton M."/>
            <person name="Yamada C."/>
            <person name="Ashburner M."/>
            <person name="Gelbart W.M."/>
            <person name="Rubin G.M."/>
            <person name="Lewis S.E."/>
        </authorList>
    </citation>
    <scope>GENOME REANNOTATION</scope>
    <source>
        <strain>Berkeley</strain>
    </source>
</reference>
<reference key="4">
    <citation type="journal article" date="2002" name="Genome Biol.">
        <title>A Drosophila full-length cDNA resource.</title>
        <authorList>
            <person name="Stapleton M."/>
            <person name="Carlson J.W."/>
            <person name="Brokstein P."/>
            <person name="Yu C."/>
            <person name="Champe M."/>
            <person name="George R.A."/>
            <person name="Guarin H."/>
            <person name="Kronmiller B."/>
            <person name="Pacleb J.M."/>
            <person name="Park S."/>
            <person name="Wan K.H."/>
            <person name="Rubin G.M."/>
            <person name="Celniker S.E."/>
        </authorList>
    </citation>
    <scope>NUCLEOTIDE SEQUENCE [LARGE SCALE MRNA]</scope>
    <source>
        <strain>Berkeley</strain>
        <tissue>Head</tissue>
    </source>
</reference>
<reference key="5">
    <citation type="journal article" date="2003" name="Biochemistry">
        <title>Drosophila TIMP is a potent inhibitor of MMPs and TACE: similarities in structure and function to TIMP-3.</title>
        <authorList>
            <person name="Wei S."/>
            <person name="Xie Z."/>
            <person name="Filenova E."/>
            <person name="Brew K."/>
        </authorList>
    </citation>
    <scope>PROTEIN SEQUENCE OF 28-40</scope>
    <scope>FUNCTION</scope>
    <scope>SUBCELLULAR LOCATION</scope>
    <scope>3D-STRUCTURE MODELING AND CIRCULAR DICHROISM ANALYSIS OF THE N-TERMINAL INHIBITORY DOMAIN</scope>
</reference>
<reference key="6">
    <citation type="journal article" date="2000" name="Eur. J. Cell Biol.">
        <title>Inflated wings, tissue autolysis and early death in tissue inhibitor of metalloproteinases mutants of Drosophila.</title>
        <authorList>
            <person name="Godenschwege T.A."/>
            <person name="Pohar N."/>
            <person name="Buchner S."/>
            <person name="Buchner E."/>
        </authorList>
    </citation>
    <scope>TISSUE SPECIFICITY</scope>
    <scope>DEVELOPMENTAL STAGE</scope>
    <scope>DISRUPTION PHENOTYPE</scope>
</reference>
<reference key="7">
    <citation type="journal article" date="2007" name="Dev. Biol.">
        <title>Tissue remodeling during maturation of the Drosophila wing.</title>
        <authorList>
            <person name="Kiger J.A. Jr."/>
            <person name="Natzle J.E."/>
            <person name="Kimbrell D.A."/>
            <person name="Paddy M.R."/>
            <person name="Kleinhesselink K."/>
            <person name="Green M.M."/>
        </authorList>
    </citation>
    <scope>FUNCTION</scope>
    <scope>TISSUE SPECIFICITY</scope>
    <scope>DISRUPTION PHENOTYPE</scope>
</reference>
<reference key="8">
    <citation type="journal article" date="2007" name="Proc. Natl. Acad. Sci. U.S.A.">
        <title>Basement membrane remodeling is essential for Drosophila disc eversion and tumor invasion.</title>
        <authorList>
            <person name="Srivastava A."/>
            <person name="Pastor-Pareja J.C."/>
            <person name="Igaki T."/>
            <person name="Pagliarini R."/>
            <person name="Xu T."/>
        </authorList>
    </citation>
    <scope>FUNCTION</scope>
</reference>
<reference key="9">
    <citation type="journal article" date="2016" name="PLoS Genet.">
        <title>ECM-regulator timp is required for stem cell niche organization and cyst production in the Drosophila ovary.</title>
        <authorList>
            <person name="Pearson J.R."/>
            <person name="Zurita F."/>
            <person name="Tomas-Gallardo L."/>
            <person name="Diaz-Torres A."/>
            <person name="Diaz de la Loza M."/>
            <person name="Franze K."/>
            <person name="Martin-Bermudo M.D."/>
            <person name="Gonzalez-Reyes A."/>
        </authorList>
    </citation>
    <scope>FUNCTION</scope>
    <scope>TISSUE SPECIFICITY</scope>
    <scope>DISRUPTION PHENOTYPE</scope>
</reference>
<keyword id="KW-0217">Developmental protein</keyword>
<keyword id="KW-0221">Differentiation</keyword>
<keyword id="KW-0903">Direct protein sequencing</keyword>
<keyword id="KW-1015">Disulfide bond</keyword>
<keyword id="KW-0479">Metal-binding</keyword>
<keyword id="KW-0481">Metalloenzyme inhibitor</keyword>
<keyword id="KW-0483">Metalloprotease inhibitor</keyword>
<keyword id="KW-0896">Oogenesis</keyword>
<keyword id="KW-0646">Protease inhibitor</keyword>
<keyword id="KW-1185">Reference proteome</keyword>
<keyword id="KW-0964">Secreted</keyword>
<keyword id="KW-0732">Signal</keyword>
<keyword id="KW-0862">Zinc</keyword>
<dbReference type="EMBL" id="AJ010067">
    <property type="protein sequence ID" value="CAA08989.1"/>
    <property type="molecule type" value="mRNA"/>
</dbReference>
<dbReference type="EMBL" id="AE014297">
    <property type="protein sequence ID" value="AAF54507.1"/>
    <property type="molecule type" value="Genomic_DNA"/>
</dbReference>
<dbReference type="EMBL" id="AE014297">
    <property type="protein sequence ID" value="AAN13465.1"/>
    <property type="molecule type" value="Genomic_DNA"/>
</dbReference>
<dbReference type="EMBL" id="AY069211">
    <property type="protein sequence ID" value="AAL39356.1"/>
    <property type="molecule type" value="mRNA"/>
</dbReference>
<dbReference type="RefSeq" id="NP_731461.1">
    <property type="nucleotide sequence ID" value="NM_169336.4"/>
</dbReference>
<dbReference type="SMR" id="Q9VH14"/>
<dbReference type="BioGRID" id="66397">
    <property type="interactions" value="11"/>
</dbReference>
<dbReference type="FunCoup" id="Q9VH14">
    <property type="interactions" value="21"/>
</dbReference>
<dbReference type="IntAct" id="Q9VH14">
    <property type="interactions" value="1"/>
</dbReference>
<dbReference type="STRING" id="7227.FBpp0081722"/>
<dbReference type="MEROPS" id="I35.005"/>
<dbReference type="PaxDb" id="7227-FBpp0081722"/>
<dbReference type="DNASU" id="41248"/>
<dbReference type="EnsemblMetazoa" id="FBtr0082245">
    <property type="protein sequence ID" value="FBpp0081722"/>
    <property type="gene ID" value="FBgn0025879"/>
</dbReference>
<dbReference type="GeneID" id="41248"/>
<dbReference type="KEGG" id="dme:Dmel_CG6281"/>
<dbReference type="UCSC" id="CG6281-RB">
    <property type="organism name" value="d. melanogaster"/>
</dbReference>
<dbReference type="AGR" id="FB:FBgn0025879"/>
<dbReference type="CTD" id="41248"/>
<dbReference type="FlyBase" id="FBgn0025879">
    <property type="gene designation" value="Timp"/>
</dbReference>
<dbReference type="VEuPathDB" id="VectorBase:FBgn0025879"/>
<dbReference type="eggNOG" id="KOG4745">
    <property type="taxonomic scope" value="Eukaryota"/>
</dbReference>
<dbReference type="GeneTree" id="ENSGT00940000169308"/>
<dbReference type="HOGENOM" id="CLU_084029_0_0_1"/>
<dbReference type="InParanoid" id="Q9VH14"/>
<dbReference type="OMA" id="PFGKCET"/>
<dbReference type="OrthoDB" id="6041373at2759"/>
<dbReference type="PhylomeDB" id="Q9VH14"/>
<dbReference type="Reactome" id="R-DME-114608">
    <property type="pathway name" value="Platelet degranulation"/>
</dbReference>
<dbReference type="Reactome" id="R-DME-1592389">
    <property type="pathway name" value="Activation of Matrix Metalloproteinases"/>
</dbReference>
<dbReference type="Reactome" id="R-DME-381426">
    <property type="pathway name" value="Regulation of Insulin-like Growth Factor (IGF) transport and uptake by Insulin-like Growth Factor Binding Proteins (IGFBPs)"/>
</dbReference>
<dbReference type="Reactome" id="R-DME-6798695">
    <property type="pathway name" value="Neutrophil degranulation"/>
</dbReference>
<dbReference type="Reactome" id="R-DME-8957275">
    <property type="pathway name" value="Post-translational protein phosphorylation"/>
</dbReference>
<dbReference type="SignaLink" id="Q9VH14"/>
<dbReference type="BioGRID-ORCS" id="41248">
    <property type="hits" value="0 hits in 3 CRISPR screens"/>
</dbReference>
<dbReference type="GenomeRNAi" id="41248"/>
<dbReference type="PRO" id="PR:Q9VH14"/>
<dbReference type="Proteomes" id="UP000000803">
    <property type="component" value="Chromosome 3R"/>
</dbReference>
<dbReference type="Bgee" id="FBgn0025879">
    <property type="expression patterns" value="Expressed in escort cell (Drosophila) in ovary and 151 other cell types or tissues"/>
</dbReference>
<dbReference type="GO" id="GO:0030425">
    <property type="term" value="C:dendrite"/>
    <property type="evidence" value="ECO:0000315"/>
    <property type="project" value="FlyBase"/>
</dbReference>
<dbReference type="GO" id="GO:0031012">
    <property type="term" value="C:extracellular matrix"/>
    <property type="evidence" value="ECO:0000318"/>
    <property type="project" value="GO_Central"/>
</dbReference>
<dbReference type="GO" id="GO:0005615">
    <property type="term" value="C:extracellular space"/>
    <property type="evidence" value="ECO:0000318"/>
    <property type="project" value="GO_Central"/>
</dbReference>
<dbReference type="GO" id="GO:0008191">
    <property type="term" value="F:metalloendopeptidase inhibitor activity"/>
    <property type="evidence" value="ECO:0000314"/>
    <property type="project" value="FlyBase"/>
</dbReference>
<dbReference type="GO" id="GO:0008270">
    <property type="term" value="F:zinc ion binding"/>
    <property type="evidence" value="ECO:0000250"/>
    <property type="project" value="UniProtKB"/>
</dbReference>
<dbReference type="GO" id="GO:0071711">
    <property type="term" value="P:basement membrane organization"/>
    <property type="evidence" value="ECO:0000315"/>
    <property type="project" value="FlyBase"/>
</dbReference>
<dbReference type="GO" id="GO:0007155">
    <property type="term" value="P:cell adhesion"/>
    <property type="evidence" value="ECO:0000315"/>
    <property type="project" value="FlyBase"/>
</dbReference>
<dbReference type="GO" id="GO:0060232">
    <property type="term" value="P:delamination"/>
    <property type="evidence" value="ECO:0000315"/>
    <property type="project" value="FlyBase"/>
</dbReference>
<dbReference type="GO" id="GO:0048526">
    <property type="term" value="P:imaginal disc-derived wing expansion"/>
    <property type="evidence" value="ECO:0000315"/>
    <property type="project" value="FlyBase"/>
</dbReference>
<dbReference type="GO" id="GO:0051045">
    <property type="term" value="P:negative regulation of membrane protein ectodomain proteolysis"/>
    <property type="evidence" value="ECO:0000318"/>
    <property type="project" value="GO_Central"/>
</dbReference>
<dbReference type="GO" id="GO:0048477">
    <property type="term" value="P:oogenesis"/>
    <property type="evidence" value="ECO:0007669"/>
    <property type="project" value="UniProtKB-KW"/>
</dbReference>
<dbReference type="GO" id="GO:0042331">
    <property type="term" value="P:phototaxis"/>
    <property type="evidence" value="ECO:0000315"/>
    <property type="project" value="FlyBase"/>
</dbReference>
<dbReference type="GO" id="GO:0007426">
    <property type="term" value="P:tracheal outgrowth, open tracheal system"/>
    <property type="evidence" value="ECO:0000315"/>
    <property type="project" value="FlyBase"/>
</dbReference>
<dbReference type="GO" id="GO:0035202">
    <property type="term" value="P:tracheal pit formation in open tracheal system"/>
    <property type="evidence" value="ECO:0000315"/>
    <property type="project" value="FlyBase"/>
</dbReference>
<dbReference type="GO" id="GO:0007419">
    <property type="term" value="P:ventral cord development"/>
    <property type="evidence" value="ECO:0000315"/>
    <property type="project" value="FlyBase"/>
</dbReference>
<dbReference type="GO" id="GO:0007472">
    <property type="term" value="P:wing disc morphogenesis"/>
    <property type="evidence" value="ECO:0000315"/>
    <property type="project" value="FlyBase"/>
</dbReference>
<dbReference type="CDD" id="cd03577">
    <property type="entry name" value="NTR_TIMP_like"/>
    <property type="match status" value="1"/>
</dbReference>
<dbReference type="Gene3D" id="2.40.50.120">
    <property type="match status" value="1"/>
</dbReference>
<dbReference type="Gene3D" id="3.90.370.10">
    <property type="entry name" value="Tissue inhibitor of metalloproteinase-1. Chain B, domain 1"/>
    <property type="match status" value="1"/>
</dbReference>
<dbReference type="InterPro" id="IPR001134">
    <property type="entry name" value="Netrin_domain"/>
</dbReference>
<dbReference type="InterPro" id="IPR001820">
    <property type="entry name" value="TIMP"/>
</dbReference>
<dbReference type="InterPro" id="IPR008993">
    <property type="entry name" value="TIMP-like_OB-fold"/>
</dbReference>
<dbReference type="InterPro" id="IPR027465">
    <property type="entry name" value="TIMP_C"/>
</dbReference>
<dbReference type="PANTHER" id="PTHR11844">
    <property type="entry name" value="METALLOPROTEASE INHIBITOR"/>
    <property type="match status" value="1"/>
</dbReference>
<dbReference type="PANTHER" id="PTHR11844:SF33">
    <property type="entry name" value="TISSUE INHIBITOR OF METALLOPROTEINASE"/>
    <property type="match status" value="1"/>
</dbReference>
<dbReference type="Pfam" id="PF00965">
    <property type="entry name" value="TIMP"/>
    <property type="match status" value="1"/>
</dbReference>
<dbReference type="SMART" id="SM00206">
    <property type="entry name" value="NTR"/>
    <property type="match status" value="1"/>
</dbReference>
<dbReference type="SUPFAM" id="SSF50242">
    <property type="entry name" value="TIMP-like"/>
    <property type="match status" value="1"/>
</dbReference>
<dbReference type="PROSITE" id="PS50189">
    <property type="entry name" value="NTR"/>
    <property type="match status" value="1"/>
</dbReference>
<organism>
    <name type="scientific">Drosophila melanogaster</name>
    <name type="common">Fruit fly</name>
    <dbReference type="NCBI Taxonomy" id="7227"/>
    <lineage>
        <taxon>Eukaryota</taxon>
        <taxon>Metazoa</taxon>
        <taxon>Ecdysozoa</taxon>
        <taxon>Arthropoda</taxon>
        <taxon>Hexapoda</taxon>
        <taxon>Insecta</taxon>
        <taxon>Pterygota</taxon>
        <taxon>Neoptera</taxon>
        <taxon>Endopterygota</taxon>
        <taxon>Diptera</taxon>
        <taxon>Brachycera</taxon>
        <taxon>Muscomorpha</taxon>
        <taxon>Ephydroidea</taxon>
        <taxon>Drosophilidae</taxon>
        <taxon>Drosophila</taxon>
        <taxon>Sophophora</taxon>
    </lineage>
</organism>
<protein>
    <recommendedName>
        <fullName evidence="9">Tissue inhibitor of metalloproteinase</fullName>
    </recommendedName>
</protein>
<evidence type="ECO:0000250" key="1">
    <source>
        <dbReference type="UniProtKB" id="P01033"/>
    </source>
</evidence>
<evidence type="ECO:0000250" key="2">
    <source>
        <dbReference type="UniProtKB" id="P16035"/>
    </source>
</evidence>
<evidence type="ECO:0000255" key="3">
    <source>
        <dbReference type="PROSITE-ProRule" id="PRU00295"/>
    </source>
</evidence>
<evidence type="ECO:0000269" key="4">
    <source>
    </source>
</evidence>
<evidence type="ECO:0000269" key="5">
    <source>
    </source>
</evidence>
<evidence type="ECO:0000269" key="6">
    <source>
    </source>
</evidence>
<evidence type="ECO:0000269" key="7">
    <source>
    </source>
</evidence>
<evidence type="ECO:0000269" key="8">
    <source>
    </source>
</evidence>
<evidence type="ECO:0000303" key="9">
    <source>
    </source>
</evidence>
<evidence type="ECO:0000305" key="10"/>
<evidence type="ECO:0000312" key="11">
    <source>
        <dbReference type="EMBL" id="AAN13465.1"/>
    </source>
</evidence>
<evidence type="ECO:0000312" key="12">
    <source>
        <dbReference type="FlyBase" id="FBgn0025879"/>
    </source>
</evidence>